<organism>
    <name type="scientific">Streptococcus pneumoniae (strain CGSP14)</name>
    <dbReference type="NCBI Taxonomy" id="516950"/>
    <lineage>
        <taxon>Bacteria</taxon>
        <taxon>Bacillati</taxon>
        <taxon>Bacillota</taxon>
        <taxon>Bacilli</taxon>
        <taxon>Lactobacillales</taxon>
        <taxon>Streptococcaceae</taxon>
        <taxon>Streptococcus</taxon>
    </lineage>
</organism>
<sequence>MAQQRRGGFKRRKKVDYIAANKIEYVDYKDTELLSRFVSERGKILPRRVTGTSAKNQRKVTTAIKRARVMALMPFVNED</sequence>
<gene>
    <name evidence="1" type="primary">rpsR</name>
    <name type="ordered locus">SPCG_1525</name>
</gene>
<protein>
    <recommendedName>
        <fullName evidence="1">Small ribosomal subunit protein bS18</fullName>
    </recommendedName>
    <alternativeName>
        <fullName evidence="2">30S ribosomal protein S18</fullName>
    </alternativeName>
</protein>
<evidence type="ECO:0000255" key="1">
    <source>
        <dbReference type="HAMAP-Rule" id="MF_00270"/>
    </source>
</evidence>
<evidence type="ECO:0000305" key="2"/>
<proteinExistence type="inferred from homology"/>
<dbReference type="EMBL" id="CP001033">
    <property type="protein sequence ID" value="ACB90777.1"/>
    <property type="molecule type" value="Genomic_DNA"/>
</dbReference>
<dbReference type="RefSeq" id="WP_000068664.1">
    <property type="nucleotide sequence ID" value="NC_010582.1"/>
</dbReference>
<dbReference type="SMR" id="B2IR58"/>
<dbReference type="GeneID" id="93963800"/>
<dbReference type="KEGG" id="spw:SPCG_1525"/>
<dbReference type="HOGENOM" id="CLU_148710_2_2_9"/>
<dbReference type="GO" id="GO:0022627">
    <property type="term" value="C:cytosolic small ribosomal subunit"/>
    <property type="evidence" value="ECO:0007669"/>
    <property type="project" value="TreeGrafter"/>
</dbReference>
<dbReference type="GO" id="GO:0070181">
    <property type="term" value="F:small ribosomal subunit rRNA binding"/>
    <property type="evidence" value="ECO:0007669"/>
    <property type="project" value="TreeGrafter"/>
</dbReference>
<dbReference type="GO" id="GO:0003735">
    <property type="term" value="F:structural constituent of ribosome"/>
    <property type="evidence" value="ECO:0007669"/>
    <property type="project" value="InterPro"/>
</dbReference>
<dbReference type="GO" id="GO:0006412">
    <property type="term" value="P:translation"/>
    <property type="evidence" value="ECO:0007669"/>
    <property type="project" value="UniProtKB-UniRule"/>
</dbReference>
<dbReference type="FunFam" id="4.10.640.10:FF:000003">
    <property type="entry name" value="30S ribosomal protein S18"/>
    <property type="match status" value="1"/>
</dbReference>
<dbReference type="Gene3D" id="4.10.640.10">
    <property type="entry name" value="Ribosomal protein S18"/>
    <property type="match status" value="1"/>
</dbReference>
<dbReference type="HAMAP" id="MF_00270">
    <property type="entry name" value="Ribosomal_bS18"/>
    <property type="match status" value="1"/>
</dbReference>
<dbReference type="InterPro" id="IPR001648">
    <property type="entry name" value="Ribosomal_bS18"/>
</dbReference>
<dbReference type="InterPro" id="IPR018275">
    <property type="entry name" value="Ribosomal_bS18_CS"/>
</dbReference>
<dbReference type="InterPro" id="IPR036870">
    <property type="entry name" value="Ribosomal_bS18_sf"/>
</dbReference>
<dbReference type="NCBIfam" id="TIGR00165">
    <property type="entry name" value="S18"/>
    <property type="match status" value="1"/>
</dbReference>
<dbReference type="PANTHER" id="PTHR13479">
    <property type="entry name" value="30S RIBOSOMAL PROTEIN S18"/>
    <property type="match status" value="1"/>
</dbReference>
<dbReference type="PANTHER" id="PTHR13479:SF40">
    <property type="entry name" value="SMALL RIBOSOMAL SUBUNIT PROTEIN BS18M"/>
    <property type="match status" value="1"/>
</dbReference>
<dbReference type="Pfam" id="PF01084">
    <property type="entry name" value="Ribosomal_S18"/>
    <property type="match status" value="1"/>
</dbReference>
<dbReference type="PRINTS" id="PR00974">
    <property type="entry name" value="RIBOSOMALS18"/>
</dbReference>
<dbReference type="SUPFAM" id="SSF46911">
    <property type="entry name" value="Ribosomal protein S18"/>
    <property type="match status" value="1"/>
</dbReference>
<dbReference type="PROSITE" id="PS00057">
    <property type="entry name" value="RIBOSOMAL_S18"/>
    <property type="match status" value="1"/>
</dbReference>
<accession>B2IR58</accession>
<comment type="function">
    <text evidence="1">Binds as a heterodimer with protein bS6 to the central domain of the 16S rRNA, where it helps stabilize the platform of the 30S subunit.</text>
</comment>
<comment type="subunit">
    <text evidence="1">Part of the 30S ribosomal subunit. Forms a tight heterodimer with protein bS6.</text>
</comment>
<comment type="similarity">
    <text evidence="1">Belongs to the bacterial ribosomal protein bS18 family.</text>
</comment>
<feature type="chain" id="PRO_1000114458" description="Small ribosomal subunit protein bS18">
    <location>
        <begin position="1"/>
        <end position="79"/>
    </location>
</feature>
<keyword id="KW-0687">Ribonucleoprotein</keyword>
<keyword id="KW-0689">Ribosomal protein</keyword>
<keyword id="KW-0694">RNA-binding</keyword>
<keyword id="KW-0699">rRNA-binding</keyword>
<name>RS18_STRPS</name>
<reference key="1">
    <citation type="journal article" date="2009" name="BMC Genomics">
        <title>Genome evolution driven by host adaptations results in a more virulent and antimicrobial-resistant Streptococcus pneumoniae serotype 14.</title>
        <authorList>
            <person name="Ding F."/>
            <person name="Tang P."/>
            <person name="Hsu M.-H."/>
            <person name="Cui P."/>
            <person name="Hu S."/>
            <person name="Yu J."/>
            <person name="Chiu C.-H."/>
        </authorList>
    </citation>
    <scope>NUCLEOTIDE SEQUENCE [LARGE SCALE GENOMIC DNA]</scope>
    <source>
        <strain>CGSP14</strain>
    </source>
</reference>